<sequence>MAIERTLSIIKPDAVAKNVIGQIYARFEAAGLKIVAAKMVHLSRGEAEQFYAVHKERPFFKDLVDFMVSGPVMIQALEGEGAIAKNRDLMGATDPKKADKGTIRADFADSIDANAVHGSDAAETAAVEIAFFFPGMNVYTR</sequence>
<feature type="chain" id="PRO_0000226575" description="Nucleoside diphosphate kinase">
    <location>
        <begin position="1"/>
        <end position="141"/>
    </location>
</feature>
<feature type="active site" description="Pros-phosphohistidine intermediate" evidence="1">
    <location>
        <position position="117"/>
    </location>
</feature>
<feature type="binding site" evidence="1">
    <location>
        <position position="11"/>
    </location>
    <ligand>
        <name>ATP</name>
        <dbReference type="ChEBI" id="CHEBI:30616"/>
    </ligand>
</feature>
<feature type="binding site" evidence="1">
    <location>
        <position position="59"/>
    </location>
    <ligand>
        <name>ATP</name>
        <dbReference type="ChEBI" id="CHEBI:30616"/>
    </ligand>
</feature>
<feature type="binding site" evidence="1">
    <location>
        <position position="87"/>
    </location>
    <ligand>
        <name>ATP</name>
        <dbReference type="ChEBI" id="CHEBI:30616"/>
    </ligand>
</feature>
<feature type="binding site" evidence="1">
    <location>
        <position position="93"/>
    </location>
    <ligand>
        <name>ATP</name>
        <dbReference type="ChEBI" id="CHEBI:30616"/>
    </ligand>
</feature>
<feature type="binding site" evidence="1">
    <location>
        <position position="104"/>
    </location>
    <ligand>
        <name>ATP</name>
        <dbReference type="ChEBI" id="CHEBI:30616"/>
    </ligand>
</feature>
<feature type="binding site" evidence="1">
    <location>
        <position position="114"/>
    </location>
    <ligand>
        <name>ATP</name>
        <dbReference type="ChEBI" id="CHEBI:30616"/>
    </ligand>
</feature>
<protein>
    <recommendedName>
        <fullName evidence="1">Nucleoside diphosphate kinase</fullName>
        <shortName evidence="1">NDK</shortName>
        <shortName evidence="1">NDP kinase</shortName>
        <ecNumber evidence="1">2.7.4.6</ecNumber>
    </recommendedName>
    <alternativeName>
        <fullName evidence="1">Nucleoside-2-P kinase</fullName>
    </alternativeName>
</protein>
<organism>
    <name type="scientific">Cupriavidus pinatubonensis (strain JMP 134 / LMG 1197)</name>
    <name type="common">Cupriavidus necator (strain JMP 134)</name>
    <dbReference type="NCBI Taxonomy" id="264198"/>
    <lineage>
        <taxon>Bacteria</taxon>
        <taxon>Pseudomonadati</taxon>
        <taxon>Pseudomonadota</taxon>
        <taxon>Betaproteobacteria</taxon>
        <taxon>Burkholderiales</taxon>
        <taxon>Burkholderiaceae</taxon>
        <taxon>Cupriavidus</taxon>
    </lineage>
</organism>
<proteinExistence type="inferred from homology"/>
<dbReference type="EC" id="2.7.4.6" evidence="1"/>
<dbReference type="EMBL" id="CP000090">
    <property type="protein sequence ID" value="AAZ61454.1"/>
    <property type="molecule type" value="Genomic_DNA"/>
</dbReference>
<dbReference type="SMR" id="Q46ZH9"/>
<dbReference type="STRING" id="264198.Reut_A2090"/>
<dbReference type="KEGG" id="reu:Reut_A2090"/>
<dbReference type="eggNOG" id="COG0105">
    <property type="taxonomic scope" value="Bacteria"/>
</dbReference>
<dbReference type="HOGENOM" id="CLU_060216_8_1_4"/>
<dbReference type="OrthoDB" id="9801161at2"/>
<dbReference type="GO" id="GO:0005737">
    <property type="term" value="C:cytoplasm"/>
    <property type="evidence" value="ECO:0007669"/>
    <property type="project" value="UniProtKB-SubCell"/>
</dbReference>
<dbReference type="GO" id="GO:0005524">
    <property type="term" value="F:ATP binding"/>
    <property type="evidence" value="ECO:0007669"/>
    <property type="project" value="UniProtKB-UniRule"/>
</dbReference>
<dbReference type="GO" id="GO:0046872">
    <property type="term" value="F:metal ion binding"/>
    <property type="evidence" value="ECO:0007669"/>
    <property type="project" value="UniProtKB-KW"/>
</dbReference>
<dbReference type="GO" id="GO:0004550">
    <property type="term" value="F:nucleoside diphosphate kinase activity"/>
    <property type="evidence" value="ECO:0007669"/>
    <property type="project" value="UniProtKB-UniRule"/>
</dbReference>
<dbReference type="GO" id="GO:0006241">
    <property type="term" value="P:CTP biosynthetic process"/>
    <property type="evidence" value="ECO:0007669"/>
    <property type="project" value="UniProtKB-UniRule"/>
</dbReference>
<dbReference type="GO" id="GO:0006183">
    <property type="term" value="P:GTP biosynthetic process"/>
    <property type="evidence" value="ECO:0007669"/>
    <property type="project" value="UniProtKB-UniRule"/>
</dbReference>
<dbReference type="GO" id="GO:0006228">
    <property type="term" value="P:UTP biosynthetic process"/>
    <property type="evidence" value="ECO:0007669"/>
    <property type="project" value="UniProtKB-UniRule"/>
</dbReference>
<dbReference type="CDD" id="cd04413">
    <property type="entry name" value="NDPk_I"/>
    <property type="match status" value="1"/>
</dbReference>
<dbReference type="FunFam" id="3.30.70.141:FF:000001">
    <property type="entry name" value="Nucleoside diphosphate kinase"/>
    <property type="match status" value="1"/>
</dbReference>
<dbReference type="Gene3D" id="3.30.70.141">
    <property type="entry name" value="Nucleoside diphosphate kinase-like domain"/>
    <property type="match status" value="1"/>
</dbReference>
<dbReference type="HAMAP" id="MF_00451">
    <property type="entry name" value="NDP_kinase"/>
    <property type="match status" value="1"/>
</dbReference>
<dbReference type="InterPro" id="IPR034907">
    <property type="entry name" value="NDK-like_dom"/>
</dbReference>
<dbReference type="InterPro" id="IPR036850">
    <property type="entry name" value="NDK-like_dom_sf"/>
</dbReference>
<dbReference type="InterPro" id="IPR001564">
    <property type="entry name" value="Nucleoside_diP_kinase"/>
</dbReference>
<dbReference type="NCBIfam" id="NF001908">
    <property type="entry name" value="PRK00668.1"/>
    <property type="match status" value="1"/>
</dbReference>
<dbReference type="PANTHER" id="PTHR46161">
    <property type="entry name" value="NUCLEOSIDE DIPHOSPHATE KINASE"/>
    <property type="match status" value="1"/>
</dbReference>
<dbReference type="PANTHER" id="PTHR46161:SF3">
    <property type="entry name" value="NUCLEOSIDE DIPHOSPHATE KINASE DDB_G0292928-RELATED"/>
    <property type="match status" value="1"/>
</dbReference>
<dbReference type="Pfam" id="PF00334">
    <property type="entry name" value="NDK"/>
    <property type="match status" value="1"/>
</dbReference>
<dbReference type="PRINTS" id="PR01243">
    <property type="entry name" value="NUCDPKINASE"/>
</dbReference>
<dbReference type="SMART" id="SM00562">
    <property type="entry name" value="NDK"/>
    <property type="match status" value="1"/>
</dbReference>
<dbReference type="SUPFAM" id="SSF54919">
    <property type="entry name" value="Nucleoside diphosphate kinase, NDK"/>
    <property type="match status" value="1"/>
</dbReference>
<dbReference type="PROSITE" id="PS51374">
    <property type="entry name" value="NDPK_LIKE"/>
    <property type="match status" value="1"/>
</dbReference>
<evidence type="ECO:0000255" key="1">
    <source>
        <dbReference type="HAMAP-Rule" id="MF_00451"/>
    </source>
</evidence>
<reference key="1">
    <citation type="journal article" date="2010" name="PLoS ONE">
        <title>The complete multipartite genome sequence of Cupriavidus necator JMP134, a versatile pollutant degrader.</title>
        <authorList>
            <person name="Lykidis A."/>
            <person name="Perez-Pantoja D."/>
            <person name="Ledger T."/>
            <person name="Mavromatis K."/>
            <person name="Anderson I.J."/>
            <person name="Ivanova N.N."/>
            <person name="Hooper S.D."/>
            <person name="Lapidus A."/>
            <person name="Lucas S."/>
            <person name="Gonzalez B."/>
            <person name="Kyrpides N.C."/>
        </authorList>
    </citation>
    <scope>NUCLEOTIDE SEQUENCE [LARGE SCALE GENOMIC DNA]</scope>
    <source>
        <strain>JMP134 / LMG 1197</strain>
    </source>
</reference>
<comment type="function">
    <text evidence="1">Major role in the synthesis of nucleoside triphosphates other than ATP. The ATP gamma phosphate is transferred to the NDP beta phosphate via a ping-pong mechanism, using a phosphorylated active-site intermediate.</text>
</comment>
<comment type="catalytic activity">
    <reaction evidence="1">
        <text>a 2'-deoxyribonucleoside 5'-diphosphate + ATP = a 2'-deoxyribonucleoside 5'-triphosphate + ADP</text>
        <dbReference type="Rhea" id="RHEA:44640"/>
        <dbReference type="ChEBI" id="CHEBI:30616"/>
        <dbReference type="ChEBI" id="CHEBI:61560"/>
        <dbReference type="ChEBI" id="CHEBI:73316"/>
        <dbReference type="ChEBI" id="CHEBI:456216"/>
        <dbReference type="EC" id="2.7.4.6"/>
    </reaction>
</comment>
<comment type="catalytic activity">
    <reaction evidence="1">
        <text>a ribonucleoside 5'-diphosphate + ATP = a ribonucleoside 5'-triphosphate + ADP</text>
        <dbReference type="Rhea" id="RHEA:18113"/>
        <dbReference type="ChEBI" id="CHEBI:30616"/>
        <dbReference type="ChEBI" id="CHEBI:57930"/>
        <dbReference type="ChEBI" id="CHEBI:61557"/>
        <dbReference type="ChEBI" id="CHEBI:456216"/>
        <dbReference type="EC" id="2.7.4.6"/>
    </reaction>
</comment>
<comment type="cofactor">
    <cofactor evidence="1">
        <name>Mg(2+)</name>
        <dbReference type="ChEBI" id="CHEBI:18420"/>
    </cofactor>
</comment>
<comment type="subunit">
    <text evidence="1">Homotetramer.</text>
</comment>
<comment type="subcellular location">
    <subcellularLocation>
        <location evidence="1">Cytoplasm</location>
    </subcellularLocation>
</comment>
<comment type="similarity">
    <text evidence="1">Belongs to the NDK family.</text>
</comment>
<accession>Q46ZH9</accession>
<keyword id="KW-0067">ATP-binding</keyword>
<keyword id="KW-0963">Cytoplasm</keyword>
<keyword id="KW-0418">Kinase</keyword>
<keyword id="KW-0460">Magnesium</keyword>
<keyword id="KW-0479">Metal-binding</keyword>
<keyword id="KW-0546">Nucleotide metabolism</keyword>
<keyword id="KW-0547">Nucleotide-binding</keyword>
<keyword id="KW-0597">Phosphoprotein</keyword>
<keyword id="KW-0808">Transferase</keyword>
<name>NDK_CUPPJ</name>
<gene>
    <name evidence="1" type="primary">ndk</name>
    <name type="ordered locus">Reut_A2090</name>
</gene>